<organism>
    <name type="scientific">Homo sapiens</name>
    <name type="common">Human</name>
    <dbReference type="NCBI Taxonomy" id="9606"/>
    <lineage>
        <taxon>Eukaryota</taxon>
        <taxon>Metazoa</taxon>
        <taxon>Chordata</taxon>
        <taxon>Craniata</taxon>
        <taxon>Vertebrata</taxon>
        <taxon>Euteleostomi</taxon>
        <taxon>Mammalia</taxon>
        <taxon>Eutheria</taxon>
        <taxon>Euarchontoglires</taxon>
        <taxon>Primates</taxon>
        <taxon>Haplorrhini</taxon>
        <taxon>Catarrhini</taxon>
        <taxon>Hominidae</taxon>
        <taxon>Homo</taxon>
    </lineage>
</organism>
<proteinExistence type="evidence at transcript level"/>
<comment type="subunit">
    <text evidence="1">Interacts with ATP1B1.</text>
</comment>
<comment type="subcellular location">
    <subcellularLocation>
        <location evidence="6">Cell membrane</location>
        <topology evidence="6">Multi-pass membrane protein</topology>
    </subcellularLocation>
</comment>
<comment type="alternative products">
    <event type="alternative splicing"/>
    <isoform>
        <id>Q5VXU1-1</id>
        <name>1</name>
        <sequence type="displayed"/>
    </isoform>
    <isoform>
        <id>Q5VXU1-2</id>
        <name>2</name>
        <sequence type="described" ref="VSP_021902"/>
    </isoform>
    <isoform>
        <id>Q5VXU1-3</id>
        <name>3</name>
        <sequence type="described" ref="VSP_029298"/>
    </isoform>
</comment>
<comment type="tissue specificity">
    <text evidence="3">Expressed in fetal brain. Weakly expressed in adult brain and thymus. Not expressed in any other normal tissue examined.</text>
</comment>
<comment type="disease">
    <text evidence="3">A chromosomal aberration involving NKAIN2 is a cause of lymphoma. Deletion del(6)(q13q21) within NKAIN2 and involving SUSP1 generates the SUSP1-NKAIN2 product (PubMed:11979551).</text>
</comment>
<comment type="similarity">
    <text evidence="6">Belongs to the NKAIN family.</text>
</comment>
<gene>
    <name type="primary">NKAIN2</name>
    <name type="synonym">FAM77B</name>
    <name type="synonym">TCBA1</name>
</gene>
<evidence type="ECO:0000250" key="1"/>
<evidence type="ECO:0000255" key="2"/>
<evidence type="ECO:0000269" key="3">
    <source>
    </source>
</evidence>
<evidence type="ECO:0000303" key="4">
    <source>
    </source>
</evidence>
<evidence type="ECO:0000303" key="5">
    <source>
    </source>
</evidence>
<evidence type="ECO:0000305" key="6"/>
<dbReference type="EMBL" id="AB070452">
    <property type="protein sequence ID" value="BAB85477.1"/>
    <property type="molecule type" value="mRNA"/>
</dbReference>
<dbReference type="EMBL" id="AL354936">
    <property type="status" value="NOT_ANNOTATED_CDS"/>
    <property type="molecule type" value="Genomic_DNA"/>
</dbReference>
<dbReference type="EMBL" id="AL356605">
    <property type="status" value="NOT_ANNOTATED_CDS"/>
    <property type="molecule type" value="Genomic_DNA"/>
</dbReference>
<dbReference type="EMBL" id="AL121968">
    <property type="status" value="NOT_ANNOTATED_CDS"/>
    <property type="molecule type" value="Genomic_DNA"/>
</dbReference>
<dbReference type="EMBL" id="AL136224">
    <property type="status" value="NOT_ANNOTATED_CDS"/>
    <property type="molecule type" value="Genomic_DNA"/>
</dbReference>
<dbReference type="EMBL" id="BC035062">
    <property type="protein sequence ID" value="AAH35062.1"/>
    <property type="molecule type" value="mRNA"/>
</dbReference>
<dbReference type="CCDS" id="CCDS34526.1">
    <molecule id="Q5VXU1-1"/>
</dbReference>
<dbReference type="RefSeq" id="NP_001035304.1">
    <molecule id="Q5VXU1-1"/>
    <property type="nucleotide sequence ID" value="NM_001040214.3"/>
</dbReference>
<dbReference type="RefSeq" id="NP_001287666.1">
    <molecule id="Q5VXU1-3"/>
    <property type="nucleotide sequence ID" value="NM_001300737.2"/>
</dbReference>
<dbReference type="RefSeq" id="NP_001287667.1">
    <property type="nucleotide sequence ID" value="NM_001300738.1"/>
</dbReference>
<dbReference type="RefSeq" id="NP_001287669.1">
    <property type="nucleotide sequence ID" value="NM_001300740.1"/>
</dbReference>
<dbReference type="RefSeq" id="NP_699186.2">
    <property type="nucleotide sequence ID" value="NM_153355.4"/>
</dbReference>
<dbReference type="SMR" id="Q5VXU1"/>
<dbReference type="FunCoup" id="Q5VXU1">
    <property type="interactions" value="178"/>
</dbReference>
<dbReference type="STRING" id="9606.ENSP00000357402"/>
<dbReference type="TCDB" id="8.A.118.1.3">
    <property type="family name" value="the na+k+-atpase beta-subunit interacting nkain (nkain) family"/>
</dbReference>
<dbReference type="GlyGen" id="Q5VXU1">
    <property type="glycosylation" value="1 site"/>
</dbReference>
<dbReference type="iPTMnet" id="Q5VXU1"/>
<dbReference type="PhosphoSitePlus" id="Q5VXU1"/>
<dbReference type="BioMuta" id="NKAIN2"/>
<dbReference type="DMDM" id="74747583"/>
<dbReference type="MassIVE" id="Q5VXU1"/>
<dbReference type="PaxDb" id="9606-ENSP00000357402"/>
<dbReference type="PeptideAtlas" id="Q5VXU1"/>
<dbReference type="ProteomicsDB" id="65610">
    <molecule id="Q5VXU1-1"/>
</dbReference>
<dbReference type="ProteomicsDB" id="65612">
    <molecule id="Q5VXU1-3"/>
</dbReference>
<dbReference type="Antibodypedia" id="51965">
    <property type="antibodies" value="61 antibodies from 15 providers"/>
</dbReference>
<dbReference type="DNASU" id="154215"/>
<dbReference type="Ensembl" id="ENST00000368416.5">
    <molecule id="Q5VXU1-2"/>
    <property type="protein sequence ID" value="ENSP00000357401.1"/>
    <property type="gene ID" value="ENSG00000188580.16"/>
</dbReference>
<dbReference type="Ensembl" id="ENST00000368417.6">
    <molecule id="Q5VXU1-1"/>
    <property type="protein sequence ID" value="ENSP00000357402.1"/>
    <property type="gene ID" value="ENSG00000188580.16"/>
</dbReference>
<dbReference type="GeneID" id="154215"/>
<dbReference type="KEGG" id="hsa:154215"/>
<dbReference type="MANE-Select" id="ENST00000368417.6">
    <property type="protein sequence ID" value="ENSP00000357402.1"/>
    <property type="RefSeq nucleotide sequence ID" value="NM_001040214.3"/>
    <property type="RefSeq protein sequence ID" value="NP_001035304.1"/>
</dbReference>
<dbReference type="UCSC" id="uc003pzn.2">
    <molecule id="Q5VXU1-1"/>
    <property type="organism name" value="human"/>
</dbReference>
<dbReference type="AGR" id="HGNC:16443"/>
<dbReference type="CTD" id="154215"/>
<dbReference type="DisGeNET" id="154215"/>
<dbReference type="GeneCards" id="NKAIN2"/>
<dbReference type="HGNC" id="HGNC:16443">
    <property type="gene designation" value="NKAIN2"/>
</dbReference>
<dbReference type="HPA" id="ENSG00000188580">
    <property type="expression patterns" value="Tissue enriched (brain)"/>
</dbReference>
<dbReference type="MalaCards" id="NKAIN2"/>
<dbReference type="MIM" id="609758">
    <property type="type" value="gene"/>
</dbReference>
<dbReference type="neXtProt" id="NX_Q5VXU1"/>
<dbReference type="OpenTargets" id="ENSG00000188580"/>
<dbReference type="PharmGKB" id="PA162397563"/>
<dbReference type="VEuPathDB" id="HostDB:ENSG00000188580"/>
<dbReference type="eggNOG" id="KOG4556">
    <property type="taxonomic scope" value="Eukaryota"/>
</dbReference>
<dbReference type="GeneTree" id="ENSGT00940000160565"/>
<dbReference type="HOGENOM" id="CLU_090781_0_1_1"/>
<dbReference type="InParanoid" id="Q5VXU1"/>
<dbReference type="OMA" id="MCLQPMF"/>
<dbReference type="OrthoDB" id="10050321at2759"/>
<dbReference type="PAN-GO" id="Q5VXU1">
    <property type="GO annotations" value="1 GO annotation based on evolutionary models"/>
</dbReference>
<dbReference type="PhylomeDB" id="Q5VXU1"/>
<dbReference type="TreeFam" id="TF321348"/>
<dbReference type="PathwayCommons" id="Q5VXU1"/>
<dbReference type="BioGRID-ORCS" id="154215">
    <property type="hits" value="22 hits in 1137 CRISPR screens"/>
</dbReference>
<dbReference type="ChiTaRS" id="NKAIN2">
    <property type="organism name" value="human"/>
</dbReference>
<dbReference type="GenomeRNAi" id="154215"/>
<dbReference type="Pharos" id="Q5VXU1">
    <property type="development level" value="Tbio"/>
</dbReference>
<dbReference type="PRO" id="PR:Q5VXU1"/>
<dbReference type="Proteomes" id="UP000005640">
    <property type="component" value="Chromosome 6"/>
</dbReference>
<dbReference type="RNAct" id="Q5VXU1">
    <property type="molecule type" value="protein"/>
</dbReference>
<dbReference type="Bgee" id="ENSG00000188580">
    <property type="expression patterns" value="Expressed in C1 segment of cervical spinal cord and 126 other cell types or tissues"/>
</dbReference>
<dbReference type="ExpressionAtlas" id="Q5VXU1">
    <property type="expression patterns" value="baseline and differential"/>
</dbReference>
<dbReference type="GO" id="GO:0005886">
    <property type="term" value="C:plasma membrane"/>
    <property type="evidence" value="ECO:0007669"/>
    <property type="project" value="UniProtKB-SubCell"/>
</dbReference>
<dbReference type="GO" id="GO:0002028">
    <property type="term" value="P:regulation of sodium ion transport"/>
    <property type="evidence" value="ECO:0000318"/>
    <property type="project" value="GO_Central"/>
</dbReference>
<dbReference type="InterPro" id="IPR008516">
    <property type="entry name" value="Na/K-Atpase_Interacting"/>
</dbReference>
<dbReference type="PANTHER" id="PTHR13084:SF3">
    <property type="entry name" value="SODIUM_POTASSIUM-TRANSPORTING ATPASE SUBUNIT BETA-1-INTERACTING PROTEIN 2"/>
    <property type="match status" value="1"/>
</dbReference>
<dbReference type="PANTHER" id="PTHR13084">
    <property type="entry name" value="T-CELL LYMPHOMA BREAKPOINT-ASSOCIATED TARGET 1-RELATED"/>
    <property type="match status" value="1"/>
</dbReference>
<dbReference type="Pfam" id="PF05640">
    <property type="entry name" value="NKAIN"/>
    <property type="match status" value="1"/>
</dbReference>
<name>NKAI2_HUMAN</name>
<keyword id="KW-0025">Alternative splicing</keyword>
<keyword id="KW-1003">Cell membrane</keyword>
<keyword id="KW-0160">Chromosomal rearrangement</keyword>
<keyword id="KW-0472">Membrane</keyword>
<keyword id="KW-1185">Reference proteome</keyword>
<keyword id="KW-0812">Transmembrane</keyword>
<keyword id="KW-1133">Transmembrane helix</keyword>
<reference key="1">
    <citation type="journal article" date="2002" name="Genes Chromosomes Cancer">
        <title>Molecular cytogenetic analysis of the breakpoint region at 6q21-22 in T-cell lymphoma/leukemia cell lines.</title>
        <authorList>
            <person name="Tagawa H."/>
            <person name="Miura I."/>
            <person name="Suzuki R."/>
            <person name="Suzuki H."/>
            <person name="Hosokawa Y."/>
            <person name="Seto M."/>
        </authorList>
    </citation>
    <scope>NUCLEOTIDE SEQUENCE [MRNA] (ISOFORM 2)</scope>
    <scope>CHROMOSOMAL REARRANGEMENT</scope>
    <scope>TISSUE SPECIFICITY</scope>
    <source>
        <tissue>Brain</tissue>
    </source>
</reference>
<reference key="2">
    <citation type="journal article" date="2003" name="Nature">
        <title>The DNA sequence and analysis of human chromosome 6.</title>
        <authorList>
            <person name="Mungall A.J."/>
            <person name="Palmer S.A."/>
            <person name="Sims S.K."/>
            <person name="Edwards C.A."/>
            <person name="Ashurst J.L."/>
            <person name="Wilming L."/>
            <person name="Jones M.C."/>
            <person name="Horton R."/>
            <person name="Hunt S.E."/>
            <person name="Scott C.E."/>
            <person name="Gilbert J.G.R."/>
            <person name="Clamp M.E."/>
            <person name="Bethel G."/>
            <person name="Milne S."/>
            <person name="Ainscough R."/>
            <person name="Almeida J.P."/>
            <person name="Ambrose K.D."/>
            <person name="Andrews T.D."/>
            <person name="Ashwell R.I.S."/>
            <person name="Babbage A.K."/>
            <person name="Bagguley C.L."/>
            <person name="Bailey J."/>
            <person name="Banerjee R."/>
            <person name="Barker D.J."/>
            <person name="Barlow K.F."/>
            <person name="Bates K."/>
            <person name="Beare D.M."/>
            <person name="Beasley H."/>
            <person name="Beasley O."/>
            <person name="Bird C.P."/>
            <person name="Blakey S.E."/>
            <person name="Bray-Allen S."/>
            <person name="Brook J."/>
            <person name="Brown A.J."/>
            <person name="Brown J.Y."/>
            <person name="Burford D.C."/>
            <person name="Burrill W."/>
            <person name="Burton J."/>
            <person name="Carder C."/>
            <person name="Carter N.P."/>
            <person name="Chapman J.C."/>
            <person name="Clark S.Y."/>
            <person name="Clark G."/>
            <person name="Clee C.M."/>
            <person name="Clegg S."/>
            <person name="Cobley V."/>
            <person name="Collier R.E."/>
            <person name="Collins J.E."/>
            <person name="Colman L.K."/>
            <person name="Corby N.R."/>
            <person name="Coville G.J."/>
            <person name="Culley K.M."/>
            <person name="Dhami P."/>
            <person name="Davies J."/>
            <person name="Dunn M."/>
            <person name="Earthrowl M.E."/>
            <person name="Ellington A.E."/>
            <person name="Evans K.A."/>
            <person name="Faulkner L."/>
            <person name="Francis M.D."/>
            <person name="Frankish A."/>
            <person name="Frankland J."/>
            <person name="French L."/>
            <person name="Garner P."/>
            <person name="Garnett J."/>
            <person name="Ghori M.J."/>
            <person name="Gilby L.M."/>
            <person name="Gillson C.J."/>
            <person name="Glithero R.J."/>
            <person name="Grafham D.V."/>
            <person name="Grant M."/>
            <person name="Gribble S."/>
            <person name="Griffiths C."/>
            <person name="Griffiths M.N.D."/>
            <person name="Hall R."/>
            <person name="Halls K.S."/>
            <person name="Hammond S."/>
            <person name="Harley J.L."/>
            <person name="Hart E.A."/>
            <person name="Heath P.D."/>
            <person name="Heathcott R."/>
            <person name="Holmes S.J."/>
            <person name="Howden P.J."/>
            <person name="Howe K.L."/>
            <person name="Howell G.R."/>
            <person name="Huckle E."/>
            <person name="Humphray S.J."/>
            <person name="Humphries M.D."/>
            <person name="Hunt A.R."/>
            <person name="Johnson C.M."/>
            <person name="Joy A.A."/>
            <person name="Kay M."/>
            <person name="Keenan S.J."/>
            <person name="Kimberley A.M."/>
            <person name="King A."/>
            <person name="Laird G.K."/>
            <person name="Langford C."/>
            <person name="Lawlor S."/>
            <person name="Leongamornlert D.A."/>
            <person name="Leversha M."/>
            <person name="Lloyd C.R."/>
            <person name="Lloyd D.M."/>
            <person name="Loveland J.E."/>
            <person name="Lovell J."/>
            <person name="Martin S."/>
            <person name="Mashreghi-Mohammadi M."/>
            <person name="Maslen G.L."/>
            <person name="Matthews L."/>
            <person name="McCann O.T."/>
            <person name="McLaren S.J."/>
            <person name="McLay K."/>
            <person name="McMurray A."/>
            <person name="Moore M.J.F."/>
            <person name="Mullikin J.C."/>
            <person name="Niblett D."/>
            <person name="Nickerson T."/>
            <person name="Novik K.L."/>
            <person name="Oliver K."/>
            <person name="Overton-Larty E.K."/>
            <person name="Parker A."/>
            <person name="Patel R."/>
            <person name="Pearce A.V."/>
            <person name="Peck A.I."/>
            <person name="Phillimore B.J.C.T."/>
            <person name="Phillips S."/>
            <person name="Plumb R.W."/>
            <person name="Porter K.M."/>
            <person name="Ramsey Y."/>
            <person name="Ranby S.A."/>
            <person name="Rice C.M."/>
            <person name="Ross M.T."/>
            <person name="Searle S.M."/>
            <person name="Sehra H.K."/>
            <person name="Sheridan E."/>
            <person name="Skuce C.D."/>
            <person name="Smith S."/>
            <person name="Smith M."/>
            <person name="Spraggon L."/>
            <person name="Squares S.L."/>
            <person name="Steward C.A."/>
            <person name="Sycamore N."/>
            <person name="Tamlyn-Hall G."/>
            <person name="Tester J."/>
            <person name="Theaker A.J."/>
            <person name="Thomas D.W."/>
            <person name="Thorpe A."/>
            <person name="Tracey A."/>
            <person name="Tromans A."/>
            <person name="Tubby B."/>
            <person name="Wall M."/>
            <person name="Wallis J.M."/>
            <person name="West A.P."/>
            <person name="White S.S."/>
            <person name="Whitehead S.L."/>
            <person name="Whittaker H."/>
            <person name="Wild A."/>
            <person name="Willey D.J."/>
            <person name="Wilmer T.E."/>
            <person name="Wood J.M."/>
            <person name="Wray P.W."/>
            <person name="Wyatt J.C."/>
            <person name="Young L."/>
            <person name="Younger R.M."/>
            <person name="Bentley D.R."/>
            <person name="Coulson A."/>
            <person name="Durbin R.M."/>
            <person name="Hubbard T."/>
            <person name="Sulston J.E."/>
            <person name="Dunham I."/>
            <person name="Rogers J."/>
            <person name="Beck S."/>
        </authorList>
    </citation>
    <scope>NUCLEOTIDE SEQUENCE [LARGE SCALE GENOMIC DNA]</scope>
</reference>
<reference key="3">
    <citation type="journal article" date="2004" name="Genome Res.">
        <title>The status, quality, and expansion of the NIH full-length cDNA project: the Mammalian Gene Collection (MGC).</title>
        <authorList>
            <consortium name="The MGC Project Team"/>
        </authorList>
    </citation>
    <scope>NUCLEOTIDE SEQUENCE [LARGE SCALE MRNA] (ISOFORM 3)</scope>
    <source>
        <tissue>Brain</tissue>
    </source>
</reference>
<feature type="chain" id="PRO_0000265088" description="Sodium/potassium-transporting ATPase subunit beta-1-interacting protein 2">
    <location>
        <begin position="1"/>
        <end position="208"/>
    </location>
</feature>
<feature type="transmembrane region" description="Helical" evidence="2">
    <location>
        <begin position="1"/>
        <end position="23"/>
    </location>
</feature>
<feature type="transmembrane region" description="Helical" evidence="2">
    <location>
        <begin position="35"/>
        <end position="55"/>
    </location>
</feature>
<feature type="transmembrane region" description="Helical" evidence="2">
    <location>
        <begin position="62"/>
        <end position="82"/>
    </location>
</feature>
<feature type="transmembrane region" description="Helical" evidence="2">
    <location>
        <begin position="153"/>
        <end position="173"/>
    </location>
</feature>
<feature type="site" description="Breakpoint for interstitial deletion to form SUSP1-NKAIN2">
    <location>
        <begin position="91"/>
        <end position="92"/>
    </location>
</feature>
<feature type="splice variant" id="VSP_029298" description="In isoform 3." evidence="5">
    <original>MGYCSGRCTLIFICGMQL</original>
    <variation>MGIIRFLLLYCPTNILT</variation>
    <location>
        <begin position="1"/>
        <end position="18"/>
    </location>
</feature>
<feature type="splice variant" id="VSP_021902" description="In isoform 2." evidence="4">
    <original>LAGFIYACYVVKCITEEEDSFDFIGGFDSYGYQGPQKTSHLQLQPMYMSK</original>
    <variation>VSVGSQPLLLVPLGLFYFCANSVHTNGICG</variation>
    <location>
        <begin position="159"/>
        <end position="208"/>
    </location>
</feature>
<accession>Q5VXU1</accession>
<accession>Q8IYR4</accession>
<accession>Q8TF67</accession>
<sequence length="208" mass="23831">MGYCSGRCTLIFICGMQLVCVLERQIFDFLGYQWAPILANFVHIIIVILGLFGTIQYRPRYITGYAVWLVLWVTWNVFVICFYLEAGDLSKETDLILTFNISMHRSWWMENGPGCTVTSVTPAPDWAPEDHRYITVSGCLLEYQYIEVAHSSLQIVLALAGFIYACYVVKCITEEEDSFDFIGGFDSYGYQGPQKTSHLQLQPMYMSK</sequence>
<protein>
    <recommendedName>
        <fullName>Sodium/potassium-transporting ATPase subunit beta-1-interacting protein 2</fullName>
        <shortName>Na(+)/K(+)-transporting ATPase subunit beta-1-interacting protein 2</shortName>
    </recommendedName>
    <alternativeName>
        <fullName>Protein FAM77B</fullName>
    </alternativeName>
    <alternativeName>
        <fullName>T-cell lymphoma breakpoint-associated target protein 1</fullName>
    </alternativeName>
</protein>